<proteinExistence type="evidence at protein level"/>
<evidence type="ECO:0000269" key="1">
    <source>
    </source>
</evidence>
<evidence type="ECO:0000269" key="2">
    <source>
    </source>
</evidence>
<evidence type="ECO:0000269" key="3">
    <source>
    </source>
</evidence>
<evidence type="ECO:0000269" key="4">
    <source>
    </source>
</evidence>
<evidence type="ECO:0000269" key="5">
    <source>
    </source>
</evidence>
<evidence type="ECO:0000269" key="6">
    <source>
    </source>
</evidence>
<evidence type="ECO:0000269" key="7">
    <source ref="6"/>
</evidence>
<evidence type="ECO:0000269" key="8">
    <source ref="8"/>
</evidence>
<evidence type="ECO:0000269" key="9">
    <source ref="9"/>
</evidence>
<evidence type="ECO:0000303" key="10">
    <source>
    </source>
</evidence>
<evidence type="ECO:0000303" key="11">
    <source>
    </source>
</evidence>
<evidence type="ECO:0000303" key="12">
    <source>
    </source>
</evidence>
<evidence type="ECO:0000305" key="13"/>
<evidence type="ECO:0000305" key="14">
    <source>
    </source>
</evidence>
<evidence type="ECO:0000305" key="15">
    <source ref="8"/>
</evidence>
<evidence type="ECO:0000312" key="16">
    <source>
        <dbReference type="EMBL" id="CDM25272.1"/>
    </source>
</evidence>
<evidence type="ECO:0007744" key="17">
    <source>
        <dbReference type="PDB" id="5G1U"/>
    </source>
</evidence>
<evidence type="ECO:0007744" key="18">
    <source>
        <dbReference type="PDB" id="5G1V"/>
    </source>
</evidence>
<evidence type="ECO:0007744" key="19">
    <source>
        <dbReference type="PDB" id="5G1W"/>
    </source>
</evidence>
<evidence type="ECO:0007744" key="20">
    <source>
        <dbReference type="PDB" id="5HLR"/>
    </source>
</evidence>
<evidence type="ECO:0007744" key="21">
    <source>
        <dbReference type="PDB" id="5HSS"/>
    </source>
</evidence>
<evidence type="ECO:0007744" key="22">
    <source>
        <dbReference type="PDB" id="5I3T"/>
    </source>
</evidence>
<evidence type="ECO:0007744" key="23">
    <source>
        <dbReference type="PDB" id="6T9H"/>
    </source>
</evidence>
<evidence type="ECO:0007744" key="24">
    <source>
        <dbReference type="PDB" id="6TFN"/>
    </source>
</evidence>
<evidence type="ECO:0007744" key="25">
    <source>
        <dbReference type="PDB" id="6TFR"/>
    </source>
</evidence>
<evidence type="ECO:0007744" key="26">
    <source>
        <dbReference type="PDB" id="6TFT"/>
    </source>
</evidence>
<evidence type="ECO:0007744" key="27">
    <source>
        <dbReference type="PDB" id="6THM"/>
    </source>
</evidence>
<evidence type="ECO:0007744" key="28">
    <source>
        <dbReference type="PDB" id="7AD2"/>
    </source>
</evidence>
<evidence type="ECO:0007829" key="29">
    <source>
        <dbReference type="PDB" id="6TFR"/>
    </source>
</evidence>
<protein>
    <recommendedName>
        <fullName evidence="11">Linalool dehydratase/isomerase</fullName>
        <ecNumber evidence="1 2 5 6 8">4.2.1.127</ecNumber>
        <ecNumber evidence="1 2 5 6 8">5.4.4.4</ecNumber>
    </recommendedName>
    <alternativeName>
        <fullName>Geraniol isomerase</fullName>
    </alternativeName>
    <alternativeName>
        <fullName evidence="10">Linalool dehydratase-isomerase</fullName>
    </alternativeName>
    <alternativeName>
        <fullName>Myrcene hydratase</fullName>
    </alternativeName>
</protein>
<gene>
    <name evidence="10" type="primary">ldi</name>
    <name evidence="12" type="synonym">linD</name>
    <name evidence="16" type="ORF">BN940_14136</name>
</gene>
<sequence length="397" mass="44454">MRFTLKTTAIVSAAALLAGFGPPPRAAELPPGRLATTEDYFAQQAKQAVTPDVMAQLAYMNYIDFISPFYSRGCSFEAWELKHTPQRVIKYSIAFYAYGLASVALIDPKLRALAGHDLDIAVSKMKCKRVWGDWEEDGFGTDPIEKENIMYKGHLNLMYGLYQLVTGSRRYEAEHAHLTRIIHDEIAANPFAGIVCEPDNYFVQCNSVAYLSLWVYDRLHGTDYRAATRAWLDFIQKDLIDPERGAFYLSYHPESGAVKPWISAYTTAWTLAMVHGMDPAFSERYYPRFKQTFVEVYDEGRKARVRETAGTDDADGGVGLASAFTLLLAREMGDQQLFDQLLNHLEPPAKPSIVSASLRYEHPGSLLFDELLFLAKVHAGFGALLRMPPPAAKLAGK</sequence>
<name>LDI_CASD6</name>
<accession>E1XUJ2</accession>
<accession>W8X534</accession>
<comment type="function">
    <text evidence="1 6 8">Anaerobically catalyzes the stereospecific hydration of beta-myrcene to (3S)-linalool and the isomerization of (3S)-linalool to geraniol (PubMed:20663876, PubMed:28068311, Ref.8). Is thus involved in the initial steps of the anaerobic degradation of the monoterpene beta-myrcene (PubMed:20663876). Also catalyzes the reverse reactions, i.e. the isomerization of geraniol to linalool and the dehydration of linalool to myrcene (PubMed:20663876, PubMed:28068311, Ref.8). In this direction, the formation of myrcene from geraniol may be seen as a detoxification process for the monoterpene alcohol (PubMed:20663876). Shows a relatively broad substrate specificity and can use various geraniol and linalool derivatives (PubMed:28068311). Substrates required a specific alpha-methylallyl alcohol signature motif (PubMed:28068311). Neither the monoterpenes alpha- and beta-ocimene nor the monoterpenoids citronellol and nerol can be used as substrates (PubMed:20663876).</text>
</comment>
<comment type="catalytic activity">
    <reaction evidence="1 2 5 6 8">
        <text>(S)-linalool = beta-myrcene + H2O</text>
        <dbReference type="Rhea" id="RHEA:30711"/>
        <dbReference type="ChEBI" id="CHEBI:98"/>
        <dbReference type="ChEBI" id="CHEBI:15377"/>
        <dbReference type="ChEBI" id="CHEBI:17221"/>
        <dbReference type="EC" id="4.2.1.127"/>
    </reaction>
</comment>
<comment type="catalytic activity">
    <reaction evidence="1 2 5 6 8">
        <text>(2E)-geraniol = (S)-linalool</text>
        <dbReference type="Rhea" id="RHEA:30715"/>
        <dbReference type="ChEBI" id="CHEBI:98"/>
        <dbReference type="ChEBI" id="CHEBI:17447"/>
        <dbReference type="EC" id="5.4.4.4"/>
    </reaction>
</comment>
<comment type="activity regulation">
    <text evidence="1">Is inhibited by molecular oxygen, high salt concentrations (NaCl, KCl, or MgCl(2)), urea, and Ti(III)citrate. Activity is not affected by EDTA.</text>
</comment>
<comment type="biophysicochemical properties">
    <kinetics>
        <KM evidence="1">750 uM for linalool</KM>
        <KM evidence="8">800 uM for linalool (for linalool dehydration)</KM>
        <KM evidence="1 8">500 uM for geraniol</KM>
        <KM evidence="8">200 uM for beta-myrcene</KM>
        <Vmax evidence="1">140.0 nmol/sec/mg enzyme for the linalool dehydration reaction</Vmax>
        <Vmax evidence="1">410.0 nmol/sec/mg enzyme for the geraniol isomerization reaction</Vmax>
        <text evidence="8">kcat is 4.37 min(-1) for linalool dehydration. kcat is 9.0 min(-1) for beta-myrcene hydration. kcat is 1.66 min(-1) for geraniol isomerization.</text>
    </kinetics>
    <phDependence>
        <text evidence="1">Optimum pH is 9.0 for the linalool dehydratase activity.</text>
    </phDependence>
    <temperatureDependence>
        <text evidence="1">Optimum temperature is 35 degrees Celsius for the linalool dehydratase activity.</text>
    </temperatureDependence>
</comment>
<comment type="pathway">
    <text evidence="1 3">Terpene metabolism; monoterpene degradation.</text>
</comment>
<comment type="subunit">
    <text evidence="1 5 6 7 8 9">Homotetramer (PubMed:20663876). Homopentamer (PubMed:27062179, PubMed:28068311, Ref.6, Ref.8, Ref.9).</text>
</comment>
<comment type="subcellular location">
    <subcellularLocation>
        <location evidence="14">Periplasm</location>
    </subcellularLocation>
</comment>
<comment type="induction">
    <text evidence="1 4">By monoterpenes such as limonene, myrcene and alpha-phellandrene, but not by acetate.</text>
</comment>
<comment type="miscellaneous">
    <text evidence="1 6">Requires DTT as a reducing agent for full activity in vitro.</text>
</comment>
<comment type="sequence caution" evidence="13">
    <conflict type="erroneous initiation">
        <sequence resource="EMBL-CDS" id="CDM25272"/>
    </conflict>
    <text>Extended N-terminus.</text>
</comment>
<dbReference type="EC" id="4.2.1.127" evidence="1 2 5 6 8"/>
<dbReference type="EC" id="5.4.4.4" evidence="1 2 5 6 8"/>
<dbReference type="EMBL" id="FR669447">
    <property type="protein sequence ID" value="CBW30776.1"/>
    <property type="molecule type" value="Genomic_DNA"/>
</dbReference>
<dbReference type="EMBL" id="HG916765">
    <property type="protein sequence ID" value="CDM25272.1"/>
    <property type="status" value="ALT_INIT"/>
    <property type="molecule type" value="Genomic_DNA"/>
</dbReference>
<dbReference type="RefSeq" id="WP_043683919.1">
    <property type="nucleotide sequence ID" value="NZ_HG916765.1"/>
</dbReference>
<dbReference type="PDB" id="5G1U">
    <property type="method" value="X-ray"/>
    <property type="resolution" value="2.57 A"/>
    <property type="chains" value="A/B/C/D/E=27-397"/>
</dbReference>
<dbReference type="PDB" id="5G1V">
    <property type="method" value="X-ray"/>
    <property type="resolution" value="2.68 A"/>
    <property type="chains" value="A/B/C/D/E=27-397"/>
</dbReference>
<dbReference type="PDB" id="5G1W">
    <property type="method" value="X-ray"/>
    <property type="resolution" value="1.76 A"/>
    <property type="chains" value="A/B/C/D/E=27-397"/>
</dbReference>
<dbReference type="PDB" id="5HLR">
    <property type="method" value="X-ray"/>
    <property type="resolution" value="1.91 A"/>
    <property type="chains" value="A/B/C/D/E=27-397"/>
</dbReference>
<dbReference type="PDB" id="5HSS">
    <property type="method" value="X-ray"/>
    <property type="resolution" value="2.50 A"/>
    <property type="chains" value="A/B/C/D/E=27-397"/>
</dbReference>
<dbReference type="PDB" id="5I3T">
    <property type="method" value="X-ray"/>
    <property type="resolution" value="2.10 A"/>
    <property type="chains" value="A/B/C/D/E=1-397"/>
</dbReference>
<dbReference type="PDB" id="6T9H">
    <property type="method" value="X-ray"/>
    <property type="resolution" value="2.58 A"/>
    <property type="chains" value="A/B/C/D/E/S/T/U/V/W=27-397"/>
</dbReference>
<dbReference type="PDB" id="6TFN">
    <property type="method" value="X-ray"/>
    <property type="resolution" value="2.18 A"/>
    <property type="chains" value="A/B/C/D/E/F/G/H/I/J=27-397"/>
</dbReference>
<dbReference type="PDB" id="6TFR">
    <property type="method" value="X-ray"/>
    <property type="resolution" value="1.45 A"/>
    <property type="chains" value="A/B/C/D/E=27-397"/>
</dbReference>
<dbReference type="PDB" id="6TFT">
    <property type="method" value="X-ray"/>
    <property type="resolution" value="2.52 A"/>
    <property type="chains" value="A/B/C/D/E=27-397"/>
</dbReference>
<dbReference type="PDB" id="6THM">
    <property type="method" value="X-ray"/>
    <property type="resolution" value="1.99 A"/>
    <property type="chains" value="A/B/C/D/E=27-397"/>
</dbReference>
<dbReference type="PDB" id="7AD2">
    <property type="method" value="X-ray"/>
    <property type="resolution" value="1.83 A"/>
    <property type="chains" value="A/B/C/D/E=27-397"/>
</dbReference>
<dbReference type="PDBsum" id="5G1U"/>
<dbReference type="PDBsum" id="5G1V"/>
<dbReference type="PDBsum" id="5G1W"/>
<dbReference type="PDBsum" id="5HLR"/>
<dbReference type="PDBsum" id="5HSS"/>
<dbReference type="PDBsum" id="5I3T"/>
<dbReference type="PDBsum" id="6T9H"/>
<dbReference type="PDBsum" id="6TFN"/>
<dbReference type="PDBsum" id="6TFR"/>
<dbReference type="PDBsum" id="6TFT"/>
<dbReference type="PDBsum" id="6THM"/>
<dbReference type="PDBsum" id="7AD2"/>
<dbReference type="SMR" id="E1XUJ2"/>
<dbReference type="MINT" id="E1XUJ2"/>
<dbReference type="STRING" id="1437824.BN940_14136"/>
<dbReference type="KEGG" id="cdn:BN940_14136"/>
<dbReference type="eggNOG" id="ENOG502Z8JJ">
    <property type="taxonomic scope" value="Bacteria"/>
</dbReference>
<dbReference type="HOGENOM" id="CLU_686417_0_0_4"/>
<dbReference type="OrthoDB" id="3561361at2"/>
<dbReference type="BioCyc" id="MetaCyc:MONOMER-16530"/>
<dbReference type="BRENDA" id="4.2.1.127">
    <property type="organism ID" value="229"/>
</dbReference>
<dbReference type="BRENDA" id="5.4.4.4">
    <property type="organism ID" value="229"/>
</dbReference>
<dbReference type="UniPathway" id="UPA00137"/>
<dbReference type="Proteomes" id="UP000019805">
    <property type="component" value="Chromosome"/>
</dbReference>
<dbReference type="GO" id="GO:0042597">
    <property type="term" value="C:periplasmic space"/>
    <property type="evidence" value="ECO:0007669"/>
    <property type="project" value="UniProtKB-SubCell"/>
</dbReference>
<dbReference type="GO" id="GO:0016836">
    <property type="term" value="F:hydro-lyase activity"/>
    <property type="evidence" value="ECO:0000314"/>
    <property type="project" value="UniProtKB"/>
</dbReference>
<dbReference type="GO" id="GO:0050486">
    <property type="term" value="F:intramolecular hydroxytransferase activity"/>
    <property type="evidence" value="ECO:0000314"/>
    <property type="project" value="UniProtKB"/>
</dbReference>
<dbReference type="GO" id="GO:0043694">
    <property type="term" value="P:monoterpene catabolic process"/>
    <property type="evidence" value="ECO:0000314"/>
    <property type="project" value="UniProtKB"/>
</dbReference>
<dbReference type="GO" id="GO:0016098">
    <property type="term" value="P:monoterpenoid metabolic process"/>
    <property type="evidence" value="ECO:0000314"/>
    <property type="project" value="UniProtKB"/>
</dbReference>
<dbReference type="InterPro" id="IPR041411">
    <property type="entry name" value="Ldi"/>
</dbReference>
<dbReference type="Pfam" id="PF18566">
    <property type="entry name" value="Ldi"/>
    <property type="match status" value="1"/>
</dbReference>
<reference key="1">
    <citation type="journal article" date="2012" name="Appl. Environ. Microbiol.">
        <title>Geraniol and geranial dehydrogenases induced in anaerobic monoterpene degradation by Castellaniella defragrans.</title>
        <authorList>
            <person name="Luddeke F."/>
            <person name="Wulfing A."/>
            <person name="Timke M."/>
            <person name="Germer F."/>
            <person name="Weber J."/>
            <person name="Dikfidan A."/>
            <person name="Rahnfeld T."/>
            <person name="Linder D."/>
            <person name="Meyerdierks A."/>
            <person name="Harder J."/>
        </authorList>
    </citation>
    <scope>NUCLEOTIDE SEQUENCE [GENOMIC DNA]</scope>
    <scope>PATHWAY</scope>
    <source>
        <strain>DSM 12143 / CCUG 39792 / 65Phen</strain>
    </source>
</reference>
<reference key="2">
    <citation type="journal article" date="2014" name="BMC Microbiol.">
        <title>The oxygen-independent metabolism of cyclic monoterpenes in Castellaniella defragrans 65Phen.</title>
        <authorList>
            <person name="Petasch J."/>
            <person name="Disch E.M."/>
            <person name="Markert S."/>
            <person name="Becher D."/>
            <person name="Schweder T."/>
            <person name="Huttel B."/>
            <person name="Reinhardt R."/>
            <person name="Harder J."/>
        </authorList>
    </citation>
    <scope>NUCLEOTIDE SEQUENCE [LARGE SCALE GENOMIC DNA]</scope>
    <scope>IDENTIFICATION BY MASS SPECTROMETRY</scope>
    <scope>INDUCTION</scope>
    <source>
        <strain>DSM 12143 / CCUG 39792 / 65Phen</strain>
    </source>
</reference>
<reference key="3">
    <citation type="journal article" date="2010" name="J. Biol. Chem.">
        <title>Linalool dehydratase-isomerase, a bifunctional enzyme in the anaerobic degradation of monoterpenes.</title>
        <authorList>
            <person name="Brodkorb D."/>
            <person name="Gottschall M."/>
            <person name="Marmulla R."/>
            <person name="Luddeke F."/>
            <person name="Harder J."/>
        </authorList>
    </citation>
    <scope>PROTEIN SEQUENCE OF 27-38</scope>
    <scope>FUNCTION</scope>
    <scope>CATALYTIC ACTIVITY</scope>
    <scope>REVERSIBILITY</scope>
    <scope>ACTIVITY REGULATION</scope>
    <scope>BIOPHYSICOCHEMICAL PROPERTIES</scope>
    <scope>SUBSTRATE SPECIFICITY</scope>
    <scope>SUBCELLULAR LOCATION</scope>
    <scope>PATHWAY</scope>
    <scope>INDUCTION</scope>
    <scope>SUBUNIT</scope>
    <source>
        <strain>DSM 12143 / CCUG 39792 / 65Phen</strain>
    </source>
</reference>
<reference key="4">
    <citation type="journal article" date="2011" name="Z. Naturforsch. C Biosci.">
        <title>Enantiospecific (S)-(+)-linalool formation from beta-myrcene by linalool dehydratase-isomerase.</title>
        <authorList>
            <person name="Luddeke F."/>
            <person name="Harder J."/>
        </authorList>
    </citation>
    <scope>CATALYTIC ACTIVITY</scope>
    <scope>REACTION STEREOSPECIFICITY</scope>
    <source>
        <strain>DSM 12143 / CCUG 39792 / 65Phen</strain>
    </source>
</reference>
<reference evidence="20 21" key="5">
    <citation type="journal article" date="2016" name="FEBS Lett.">
        <title>X-ray structure of linalool dehydratase/isomerase from Castellaniella defragrans reveals enzymatic alkene synthesis.</title>
        <authorList>
            <person name="Weidenweber S."/>
            <person name="Marmulla R."/>
            <person name="Ermler U."/>
            <person name="Harder J."/>
        </authorList>
    </citation>
    <scope>X-RAY CRYSTALLOGRAPHY (1.91 ANGSTROMS) OF 27-397 OF APOENZYME AND IN COMPLEX WITH BETA-MYRCENE AND GERANIOL</scope>
    <scope>CATALYTIC ACTIVITY</scope>
    <scope>SUBUNIT</scope>
    <scope>DISULFIDE BOND</scope>
    <scope>MUTAGENESIS OF CYS-74; TYR-91; CYS-127; HIS-154; CYS-196 AND CYS-205</scope>
</reference>
<reference evidence="22" key="6">
    <citation type="submission" date="2016-02" db="PDB data bank">
        <title>Native structure of the linalool dehydratase-isomerase from Castellaniella defragrans.</title>
        <authorList>
            <person name="LaMattina J.W."/>
            <person name="Carlock M."/>
            <person name="Koch D.J."/>
            <person name="Lanzilotta W.N."/>
        </authorList>
    </citation>
    <scope>X-RAY CRYSTALLOGRAPHY (2.10 ANGSTROMS)</scope>
    <scope>SUBUNIT</scope>
    <scope>DISULFIDE BOND</scope>
</reference>
<reference evidence="17 18 19" key="7">
    <citation type="journal article" date="2017" name="Nat. Chem. Biol.">
        <title>Structural and functional insights into asymmetric enzymatic dehydration of alkenols.</title>
        <authorList>
            <person name="Nestl B.M."/>
            <person name="Geinitz C."/>
            <person name="Popa S."/>
            <person name="Rizek S."/>
            <person name="Haselbeck R.J."/>
            <person name="Stephen R."/>
            <person name="Noble M.A."/>
            <person name="Fischer M.P."/>
            <person name="Ralph E.C."/>
            <person name="Hau H.T."/>
            <person name="Man H."/>
            <person name="Omar M."/>
            <person name="Turkenburg J.P."/>
            <person name="van Dien S."/>
            <person name="Culler S.J."/>
            <person name="Grogan G."/>
            <person name="Hauer B."/>
        </authorList>
    </citation>
    <scope>X-RAY CRYSTALLOGRAPHY (1.76 ANGSTROMS) OF 27-397 OF APOENZYME; A SELENOMETHIONINE DERIVATIVE AND A SELENOMETHIONINE DERIVATIVE IN COMPLEX WITH GERANIOL</scope>
    <scope>FUNCTION</scope>
    <scope>CATALYTIC ACTIVITY</scope>
    <scope>SUBSTRATE SPECIFICITY</scope>
    <scope>SUBUNIT</scope>
    <scope>MUTAGENESIS OF TYR-70; MET-150; HIS-154; CYS-196 AND CYS-205</scope>
    <scope>DISULFIDE BONDS</scope>
    <source>
        <strain>DSM 12143 / CCUG 39792 / 65Phen</strain>
    </source>
</reference>
<reference evidence="23 24 25 26 27" key="8">
    <citation type="journal article" date="2020" name="ACS Catal.">
        <title>Mutational analysis of linalool dehydratase isomerase suggests that alcohol and alkene transformations are catalyzed using noncovalent mechanisms.</title>
        <authorList>
            <person name="Cuetos A."/>
            <person name="Iglesias-Fernandez J."/>
            <person name="Danesh-Azari H.R."/>
            <person name="Zukic E."/>
            <person name="Dowle A."/>
            <person name="Osuna S."/>
            <person name="Grogan G."/>
        </authorList>
    </citation>
    <scope>X-RAY CRYSTALLOGRAPHY (1.45 ANGSTROMS) OF 27-397 OF WILD-TYPE IN COMPLEX WITH MYRCENE AND MUTANTS ALA-150; ALA-196; SER-196 AND ALA-205</scope>
    <scope>FUNCTION</scope>
    <scope>CATALYTIC ACTIVITY</scope>
    <scope>REACTION MECHANISM</scope>
    <scope>BIOPHYSICOCHEMICAL PROPERTIES</scope>
    <scope>SUBUNIT</scope>
    <scope>DISULFIDE BOND</scope>
    <scope>ACTIVE SITE</scope>
    <scope>MUTAGENESIS OF ASP-64; TYR-70; TYR-91; MET-150; HIS-154; CYS-196 AND CYS-205</scope>
    <source>
        <strain>DSM 12143 / CCUG 39792 / 65Phen</strain>
    </source>
</reference>
<reference evidence="28" key="9">
    <citation type="submission" date="2020-09" db="PDB data bank">
        <title>Linalool dehydratase isomerase G107T mutant.</title>
        <authorList>
            <person name="Cuetos A."/>
            <person name="Fischer M.P."/>
            <person name="Hauer B."/>
            <person name="Grogan G."/>
        </authorList>
    </citation>
    <scope>X-RAY CRYSTALLOGRAPHY (1.83 ANGSTROMS) OF 27-397 OF MUTANT THR-132</scope>
    <scope>SUBUNIT</scope>
    <scope>DISULFIDE BOND</scope>
</reference>
<keyword id="KW-0002">3D-structure</keyword>
<keyword id="KW-0903">Direct protein sequencing</keyword>
<keyword id="KW-1015">Disulfide bond</keyword>
<keyword id="KW-0413">Isomerase</keyword>
<keyword id="KW-0456">Lyase</keyword>
<keyword id="KW-0574">Periplasm</keyword>
<keyword id="KW-1185">Reference proteome</keyword>
<keyword id="KW-0732">Signal</keyword>
<organism>
    <name type="scientific">Castellaniella defragrans (strain DSM 12143 / CCUG 39792 / 65Phen)</name>
    <name type="common">Alcaligenes defragrans</name>
    <dbReference type="NCBI Taxonomy" id="1437824"/>
    <lineage>
        <taxon>Bacteria</taxon>
        <taxon>Pseudomonadati</taxon>
        <taxon>Pseudomonadota</taxon>
        <taxon>Betaproteobacteria</taxon>
        <taxon>Burkholderiales</taxon>
        <taxon>Alcaligenaceae</taxon>
        <taxon>Castellaniella</taxon>
    </lineage>
</organism>
<feature type="signal peptide" evidence="1">
    <location>
        <begin position="1"/>
        <end position="26"/>
    </location>
</feature>
<feature type="chain" id="PRO_0000418647" description="Linalool dehydratase/isomerase">
    <location>
        <begin position="27"/>
        <end position="397"/>
    </location>
</feature>
<feature type="active site" description="Proton donor/acceptor" evidence="15">
    <location>
        <position position="64"/>
    </location>
</feature>
<feature type="binding site" evidence="5 21">
    <location>
        <position position="196"/>
    </location>
    <ligand>
        <name>(2E)-geraniol</name>
        <dbReference type="ChEBI" id="CHEBI:17447"/>
    </ligand>
</feature>
<feature type="disulfide bond" evidence="5 6 7 8 9 17 18 19 20 21 22 23 24 25 26 27 28">
    <location>
        <begin position="74"/>
        <end position="127"/>
    </location>
</feature>
<feature type="disulfide bond" evidence="6 17">
    <location>
        <begin position="196"/>
        <end position="205"/>
    </location>
</feature>
<feature type="mutagenesis site" description="Dramatic decrease in beta-myrcene hydration, linalool dehydration and geraniol isomerization." evidence="8">
    <original>D</original>
    <variation>A</variation>
    <location>
        <position position="64"/>
    </location>
</feature>
<feature type="mutagenesis site" description="Retains 22% of wild-type activity for the geraniol-myrcene conversion, but only 0.5% of wild-type activity for the dehydration of linalool to myrcene. Dramatic decrease in beta-myrcene hydration and geraniol isomerization." evidence="6 8">
    <original>Y</original>
    <variation>F</variation>
    <location>
        <position position="70"/>
    </location>
</feature>
<feature type="mutagenesis site" description="Loss of activity." evidence="5">
    <original>C</original>
    <variation>S</variation>
    <location>
        <position position="74"/>
    </location>
</feature>
<feature type="mutagenesis site" description="Significant decrease in activity for beta-myrcene hydration, dehydration of linalool and geraniol isomerization." evidence="5 8">
    <original>Y</original>
    <variation>F</variation>
    <location>
        <position position="91"/>
    </location>
</feature>
<feature type="mutagenesis site" description="Loss of activity." evidence="5">
    <original>C</original>
    <variation>S</variation>
    <location>
        <position position="127"/>
    </location>
</feature>
<feature type="mutagenesis site" description="Decreases activity for beta-myrcene hydration, dehydration of linalool and geraniol isomerization. Retains 2% of wild-type activity for the geraniol-myrcene conversion." evidence="6 8">
    <original>M</original>
    <variation>A</variation>
    <location>
        <position position="150"/>
    </location>
</feature>
<feature type="mutagenesis site" description="Significant decrease in activity for beta-myrcene hydration, dehydration of linalool and geraniol isomerization. Retains 23% of wild-type activity for the geraniol-myrcene conversion, but only 6% of wild-type activity for the dehydration of linalool to myrcene." evidence="6 8">
    <original>H</original>
    <variation>A</variation>
    <location>
        <position position="154"/>
    </location>
</feature>
<feature type="mutagenesis site" description="Loss of activity." evidence="5">
    <original>H</original>
    <variation>Y</variation>
    <location>
        <position position="154"/>
    </location>
</feature>
<feature type="mutagenesis site" description="Loss of activity." evidence="5 6 8">
    <original>C</original>
    <variation>A</variation>
    <variation>S</variation>
    <location>
        <position position="196"/>
    </location>
</feature>
<feature type="mutagenesis site" description="Loss of activity." evidence="5 6 8">
    <original>C</original>
    <variation>A</variation>
    <variation>S</variation>
    <location>
        <position position="205"/>
    </location>
</feature>
<feature type="helix" evidence="29">
    <location>
        <begin position="37"/>
        <end position="41"/>
    </location>
</feature>
<feature type="helix" evidence="29">
    <location>
        <begin position="43"/>
        <end position="46"/>
    </location>
</feature>
<feature type="helix" evidence="29">
    <location>
        <begin position="51"/>
        <end position="61"/>
    </location>
</feature>
<feature type="turn" evidence="29">
    <location>
        <begin position="64"/>
        <end position="66"/>
    </location>
</feature>
<feature type="strand" evidence="29">
    <location>
        <begin position="72"/>
        <end position="74"/>
    </location>
</feature>
<feature type="helix" evidence="29">
    <location>
        <begin position="77"/>
        <end position="81"/>
    </location>
</feature>
<feature type="helix" evidence="29">
    <location>
        <begin position="86"/>
        <end position="88"/>
    </location>
</feature>
<feature type="helix" evidence="29">
    <location>
        <begin position="89"/>
        <end position="106"/>
    </location>
</feature>
<feature type="helix" evidence="29">
    <location>
        <begin position="108"/>
        <end position="110"/>
    </location>
</feature>
<feature type="helix" evidence="29">
    <location>
        <begin position="111"/>
        <end position="125"/>
    </location>
</feature>
<feature type="helix" evidence="29">
    <location>
        <begin position="128"/>
        <end position="131"/>
    </location>
</feature>
<feature type="helix" evidence="29">
    <location>
        <begin position="133"/>
        <end position="136"/>
    </location>
</feature>
<feature type="strand" evidence="29">
    <location>
        <begin position="143"/>
        <end position="147"/>
    </location>
</feature>
<feature type="helix" evidence="29">
    <location>
        <begin position="149"/>
        <end position="166"/>
    </location>
</feature>
<feature type="helix" evidence="29">
    <location>
        <begin position="172"/>
        <end position="188"/>
    </location>
</feature>
<feature type="strand" evidence="29">
    <location>
        <begin position="190"/>
        <end position="193"/>
    </location>
</feature>
<feature type="helix" evidence="29">
    <location>
        <begin position="203"/>
        <end position="220"/>
    </location>
</feature>
<feature type="helix" evidence="29">
    <location>
        <begin position="224"/>
        <end position="227"/>
    </location>
</feature>
<feature type="helix" evidence="29">
    <location>
        <begin position="228"/>
        <end position="235"/>
    </location>
</feature>
<feature type="turn" evidence="29">
    <location>
        <begin position="236"/>
        <end position="239"/>
    </location>
</feature>
<feature type="turn" evidence="29">
    <location>
        <begin position="242"/>
        <end position="245"/>
    </location>
</feature>
<feature type="strand" evidence="29">
    <location>
        <begin position="246"/>
        <end position="249"/>
    </location>
</feature>
<feature type="turn" evidence="29">
    <location>
        <begin position="253"/>
        <end position="256"/>
    </location>
</feature>
<feature type="helix" evidence="29">
    <location>
        <begin position="264"/>
        <end position="275"/>
    </location>
</feature>
<feature type="helix" evidence="29">
    <location>
        <begin position="279"/>
        <end position="293"/>
    </location>
</feature>
<feature type="strand" evidence="29">
    <location>
        <begin position="294"/>
        <end position="297"/>
    </location>
</feature>
<feature type="turn" evidence="29">
    <location>
        <begin position="298"/>
        <end position="301"/>
    </location>
</feature>
<feature type="strand" evidence="29">
    <location>
        <begin position="302"/>
        <end position="310"/>
    </location>
</feature>
<feature type="helix" evidence="29">
    <location>
        <begin position="321"/>
        <end position="332"/>
    </location>
</feature>
<feature type="helix" evidence="29">
    <location>
        <begin position="335"/>
        <end position="345"/>
    </location>
</feature>
<feature type="helix" evidence="29">
    <location>
        <begin position="347"/>
        <end position="349"/>
    </location>
</feature>
<feature type="strand" evidence="29">
    <location>
        <begin position="351"/>
        <end position="354"/>
    </location>
</feature>
<feature type="strand" evidence="29">
    <location>
        <begin position="357"/>
        <end position="362"/>
    </location>
</feature>
<feature type="helix" evidence="29">
    <location>
        <begin position="368"/>
        <end position="377"/>
    </location>
</feature>
<feature type="helix" evidence="29">
    <location>
        <begin position="381"/>
        <end position="385"/>
    </location>
</feature>